<reference key="1">
    <citation type="journal article" date="1985" name="J. Virol.">
        <title>Primary structure of p19 species of avian sarcoma and leukemia viruses.</title>
        <authorList>
            <person name="Vogt V.M."/>
            <person name="Pepinsky R.B."/>
            <person name="Southard L.E."/>
        </authorList>
    </citation>
    <scope>NUCLEOTIDE SEQUENCE [GENOMIC RNA]</scope>
</reference>
<sequence>MEAVIKVISSACKTYCGKTSPSKKEIGAMLSLLQKEGLLMSPSDLYSPGSWDPITAALSQRAMVLGKSGELKTWGLVLGALKAAREEQVTSEQAKFWLGLGGGRVSPPGPECIEKPATERRIDKGEEVGETTAQRDAKMAPEKMATPKTVGTSCYQCGTATGCNCATASAPPPPYVGSGLYPSLAGVGEQQGQGGDTPWGAEQPRAEPGHAGLAPGPALTDWARIREELASTGPPVVAM</sequence>
<name>GAG_AVEV1</name>
<evidence type="ECO:0000255" key="1"/>
<evidence type="ECO:0000256" key="2">
    <source>
        <dbReference type="SAM" id="MobiDB-lite"/>
    </source>
</evidence>
<evidence type="ECO:0000305" key="3"/>
<feature type="chain" id="PRO_0000040809" description="Core protein p23" evidence="1">
    <location>
        <begin position="1"/>
        <end position="177"/>
    </location>
</feature>
<feature type="chain" id="PRO_0000040810" description="Matrix protein p19">
    <location>
        <begin position="1"/>
        <end position="155"/>
    </location>
</feature>
<feature type="chain" id="PRO_0000040811" description="Core protein p2" evidence="1">
    <location>
        <begin position="156"/>
        <end position="177"/>
    </location>
</feature>
<feature type="chain" id="PRO_0000040812" description="Core protein p10">
    <location>
        <begin position="178"/>
        <end position="239"/>
    </location>
</feature>
<feature type="region of interest" description="Disordered" evidence="2">
    <location>
        <begin position="124"/>
        <end position="144"/>
    </location>
</feature>
<feature type="region of interest" description="Disordered" evidence="2">
    <location>
        <begin position="184"/>
        <end position="214"/>
    </location>
</feature>
<feature type="short sequence motif" description="PPXY motif" evidence="1">
    <location>
        <begin position="172"/>
        <end position="175"/>
    </location>
</feature>
<feature type="compositionally biased region" description="Basic and acidic residues" evidence="2">
    <location>
        <begin position="124"/>
        <end position="141"/>
    </location>
</feature>
<feature type="non-terminal residue">
    <location>
        <position position="239"/>
    </location>
</feature>
<accession>P06936</accession>
<accession>Q64986</accession>
<accession>Q64987</accession>
<accession>Q64988</accession>
<proteinExistence type="predicted"/>
<keyword id="KW-0945">Host-virus interaction</keyword>
<keyword id="KW-1198">Viral budding</keyword>
<keyword id="KW-1187">Viral budding via the host ESCRT complexes</keyword>
<keyword id="KW-0468">Viral matrix protein</keyword>
<keyword id="KW-1188">Viral release from host cell</keyword>
<keyword id="KW-0946">Virion</keyword>
<organismHost>
    <name type="scientific">Galliformes</name>
    <dbReference type="NCBI Taxonomy" id="8976"/>
</organismHost>
<gene>
    <name type="primary">ev-1</name>
</gene>
<comment type="subcellular location">
    <molecule>Matrix protein p19</molecule>
    <subcellularLocation>
        <location evidence="3">Virion</location>
    </subcellularLocation>
</comment>
<comment type="domain">
    <text evidence="3">Late-budding domains (L domains) are short sequence motifs essential for viral particle budding. They recruit proteins of the host ESCRT machinery (Endosomal Sorting Complex Required for Transport) or ESCRT-associated proteins. Gag contains one L domain: a PPXY motif which potentially interacts with the WW domain 3 of NEDD4 E3 ubiquitin ligase (Potential).</text>
</comment>
<organism>
    <name type="scientific">Avian endogenous virus EV-1</name>
    <dbReference type="NCBI Taxonomy" id="11859"/>
    <lineage>
        <taxon>Viruses</taxon>
        <taxon>Riboviria</taxon>
        <taxon>Pararnavirae</taxon>
        <taxon>Artverviricota</taxon>
        <taxon>Revtraviricetes</taxon>
        <taxon>Ortervirales</taxon>
        <taxon>Retroviridae</taxon>
        <taxon>Orthoretrovirinae</taxon>
        <taxon>Alpharetrovirus</taxon>
        <taxon>Avian leukosis virus</taxon>
    </lineage>
</organism>
<protein>
    <recommendedName>
        <fullName>Gag polyprotein</fullName>
    </recommendedName>
    <alternativeName>
        <fullName>Core polyprotein</fullName>
    </alternativeName>
    <component>
        <recommendedName>
            <fullName>Matrix protein p19</fullName>
        </recommendedName>
    </component>
    <component>
        <recommendedName>
            <fullName>Core protein p23</fullName>
        </recommendedName>
    </component>
    <component>
        <recommendedName>
            <fullName>Core protein p2</fullName>
        </recommendedName>
    </component>
    <component>
        <recommendedName>
            <fullName>Core protein p10</fullName>
        </recommendedName>
    </component>
</protein>
<dbReference type="EMBL" id="M30517">
    <property type="protein sequence ID" value="AAA42567.1"/>
    <property type="molecule type" value="Genomic_RNA"/>
</dbReference>
<dbReference type="PIR" id="A25317">
    <property type="entry name" value="A25317"/>
</dbReference>
<dbReference type="SMR" id="P06936"/>
<dbReference type="GO" id="GO:0044423">
    <property type="term" value="C:virion component"/>
    <property type="evidence" value="ECO:0007669"/>
    <property type="project" value="UniProtKB-KW"/>
</dbReference>
<dbReference type="GO" id="GO:0039660">
    <property type="term" value="F:structural constituent of virion"/>
    <property type="evidence" value="ECO:0007669"/>
    <property type="project" value="UniProtKB-KW"/>
</dbReference>
<dbReference type="GO" id="GO:0039702">
    <property type="term" value="P:viral budding via host ESCRT complex"/>
    <property type="evidence" value="ECO:0007669"/>
    <property type="project" value="UniProtKB-KW"/>
</dbReference>
<dbReference type="FunFam" id="1.10.150.90:FF:000002">
    <property type="entry name" value="Gag polyprotein"/>
    <property type="match status" value="1"/>
</dbReference>
<dbReference type="Gene3D" id="1.10.150.90">
    <property type="entry name" value="Immunodeficiency lentiviruses, gag gene matrix protein p17"/>
    <property type="match status" value="1"/>
</dbReference>
<dbReference type="InterPro" id="IPR004028">
    <property type="entry name" value="Gag_M"/>
</dbReference>
<dbReference type="InterPro" id="IPR012344">
    <property type="entry name" value="Matrix_HIV/RSV_N"/>
</dbReference>
<dbReference type="InterPro" id="IPR010999">
    <property type="entry name" value="Retrovr_matrix"/>
</dbReference>
<dbReference type="Pfam" id="PF02813">
    <property type="entry name" value="Retro_M"/>
    <property type="match status" value="1"/>
</dbReference>
<dbReference type="SUPFAM" id="SSF47836">
    <property type="entry name" value="Retroviral matrix proteins"/>
    <property type="match status" value="1"/>
</dbReference>